<evidence type="ECO:0000250" key="1">
    <source>
        <dbReference type="UniProtKB" id="Q9UJX2"/>
    </source>
</evidence>
<evidence type="ECO:0000255" key="2"/>
<evidence type="ECO:0000256" key="3">
    <source>
        <dbReference type="SAM" id="MobiDB-lite"/>
    </source>
</evidence>
<evidence type="ECO:0000269" key="4">
    <source>
    </source>
</evidence>
<evidence type="ECO:0000269" key="5">
    <source>
    </source>
</evidence>
<evidence type="ECO:0000269" key="6">
    <source>
    </source>
</evidence>
<evidence type="ECO:0000269" key="7">
    <source>
    </source>
</evidence>
<evidence type="ECO:0000269" key="8">
    <source>
    </source>
</evidence>
<evidence type="ECO:0000269" key="9">
    <source>
    </source>
</evidence>
<evidence type="ECO:0000269" key="10">
    <source>
    </source>
</evidence>
<evidence type="ECO:0000303" key="11">
    <source>
    </source>
</evidence>
<evidence type="ECO:0000305" key="12"/>
<evidence type="ECO:0000312" key="13">
    <source>
        <dbReference type="Proteomes" id="UP000001940"/>
    </source>
</evidence>
<evidence type="ECO:0000312" key="14">
    <source>
        <dbReference type="WormBase" id="F10C5.1"/>
    </source>
</evidence>
<comment type="function">
    <text evidence="4 5 6 7 8 10">Probable component of the anaphase promoting complex/cyclosome (APC/C), a cell cycle-regulated E3 ubiquitin ligase that controls progression through mitosis and the G1 phase of the cell cycle (PubMed:11861581, PubMed:15238519). The APC/C complex acts by mediating ubiquitination and subsequent degradation of target proteins (PubMed:11861581). Developmental role in early embryogenesis and the metaphase to anaphase transition in oocyte and spermatocyte meiosis and mitosis in germ cells (PubMed:11134076, PubMed:11861581, PubMed:15238519). Required for embryonic anterior-posterior axis formation (PubMed:11832245). Plays a role in regulating the abundance of glr-1 receptors in postmitotic neurons, which may in turn control animal locomotion (PubMed:15556870). Involved in regulating GABA neurotransmitter release at neuromuscular junctions in GABA motor neurons (PubMed:24321454).</text>
</comment>
<comment type="pathway">
    <text evidence="12">Protein modification; protein ubiquitination.</text>
</comment>
<comment type="subunit">
    <text evidence="12">The APC/C complex is probably composed of at least 12 subunits: apc-2, apc-10, apc-11, cdc-26, emb-1, emb-27, emb-30, mat-1, mat-2, mat-3, such-1 and gfi-3.</text>
</comment>
<comment type="disruption phenotype">
    <text evidence="5 6 7">Developmental defects in the gonad, germline, male tail and hermaphrodite vulva (PubMed:15238519). Increased number of germ cells arrested at the metaphase stage of mitosis during the larval stage L4; by adulthood, there are no nuclei in the distal part of the gonad and as a result, no sperm or oocytes are formed (PubMed:15238519). RNAi-mediated knockdown results in defective metaphase to anaphase transition (Mat phenotype) and embryos that arrest at the one-cell stage that display defects in the formation of the anterior-posterior axis (PubMed:11832245, PubMed:11861581).</text>
</comment>
<comment type="similarity">
    <text evidence="12">Belongs to the APC8/CDC23 family.</text>
</comment>
<gene>
    <name evidence="14" type="primary">mat-3</name>
    <name evidence="14" type="synonym">apc-8</name>
    <name evidence="14" type="synonym">cdc-23</name>
    <name evidence="14" type="synonym">pod-4</name>
    <name evidence="14" type="synonym">vex-2</name>
    <name evidence="14" type="ORF">F10C5.1</name>
</gene>
<keyword id="KW-0131">Cell cycle</keyword>
<keyword id="KW-0132">Cell division</keyword>
<keyword id="KW-0217">Developmental protein</keyword>
<keyword id="KW-0469">Meiosis</keyword>
<keyword id="KW-0498">Mitosis</keyword>
<keyword id="KW-0532">Neurotransmitter transport</keyword>
<keyword id="KW-1185">Reference proteome</keyword>
<keyword id="KW-0677">Repeat</keyword>
<keyword id="KW-0802">TPR repeat</keyword>
<keyword id="KW-0813">Transport</keyword>
<keyword id="KW-0833">Ubl conjugation pathway</keyword>
<sequence length="673" mass="76993">MNVSFSTPVQNSTASRLALIQQAAARSGALPPAGQYRGSKLSPFDVSQMSGVSISMVERAKINGPEFVEELEWLRQQTTSRCFLDAEMWTNEILAHLPDKWCAPNTLNLYNQVSELVLDNTRSPMASPASNSLYAPGEDQMPTVKRNHTSRFAQSLIKNKEFRRAAFFLEKTMNGNKLDHFLHFRCLFLAYYQEHLENDAEGIERKTSFAEERSPFSLLYQRMEDKKLRENEDVWFEYLMGLLEVELGLKDLAEKSFRNVVIREPRIWPAWEALSRLIADIEDADKFVTSAEVKSLWMGDWFMTLVLQRFHQHSMAIQKAEQLVTRGMTGLPMIITKIAACSNARHDHDQAISNFEDVRKADPYRLGDLHLLSDSLYIRNDQKKLSTLAIEVYKVHKFRWETCCIVANYHAIRRDSEHAIKFFQRALRLNPGLAALWVLIGHEFMEMKNNAAACVSYRRAIEIDPADHRGWYGLGQMYDIMKMPAYALFYYQEAQKCKPHDSRLLVALGDIYSKLNRIEDAEKCFTGAYLFGDVEGNALWSLAKLHERYSDDNKAAQAFEVFLVVYELVTSAEEKIIYAIAFLANHFFKIEDFDKASEYATKCLAFETLCQEGNRLFREIAKIQARESRLPVEEAPGPSNASAAGGQEAMDTEEAPQEGGEEEMSEGEDDFSF</sequence>
<accession>Q19294</accession>
<proteinExistence type="evidence at protein level"/>
<dbReference type="EMBL" id="FO081107">
    <property type="protein sequence ID" value="CCD69151.1"/>
    <property type="molecule type" value="Genomic_DNA"/>
</dbReference>
<dbReference type="RefSeq" id="NP_497203.1">
    <property type="nucleotide sequence ID" value="NM_064802.7"/>
</dbReference>
<dbReference type="SMR" id="Q19294"/>
<dbReference type="ComplexPortal" id="CPX-3382">
    <property type="entry name" value="Anaphase-promoting complex"/>
</dbReference>
<dbReference type="DIP" id="DIP-24631N"/>
<dbReference type="FunCoup" id="Q19294">
    <property type="interactions" value="1852"/>
</dbReference>
<dbReference type="IntAct" id="Q19294">
    <property type="interactions" value="2"/>
</dbReference>
<dbReference type="STRING" id="6239.F10C5.1.1"/>
<dbReference type="PaxDb" id="6239-F10C5.1"/>
<dbReference type="PeptideAtlas" id="Q19294"/>
<dbReference type="EnsemblMetazoa" id="F10C5.1.1">
    <property type="protein sequence ID" value="F10C5.1.1"/>
    <property type="gene ID" value="WBGene00003134"/>
</dbReference>
<dbReference type="GeneID" id="175205"/>
<dbReference type="KEGG" id="cel:CELE_F10C5.1"/>
<dbReference type="UCSC" id="F10C5.1">
    <property type="organism name" value="c. elegans"/>
</dbReference>
<dbReference type="AGR" id="WB:WBGene00003134"/>
<dbReference type="CTD" id="175205"/>
<dbReference type="WormBase" id="F10C5.1">
    <property type="protein sequence ID" value="CE26888"/>
    <property type="gene ID" value="WBGene00003134"/>
    <property type="gene designation" value="mat-3"/>
</dbReference>
<dbReference type="eggNOG" id="KOG1155">
    <property type="taxonomic scope" value="Eukaryota"/>
</dbReference>
<dbReference type="GeneTree" id="ENSGT00950000182950"/>
<dbReference type="HOGENOM" id="CLU_018320_3_0_1"/>
<dbReference type="InParanoid" id="Q19294"/>
<dbReference type="OMA" id="HEFMEQK"/>
<dbReference type="OrthoDB" id="10262026at2759"/>
<dbReference type="PhylomeDB" id="Q19294"/>
<dbReference type="Reactome" id="R-CEL-983168">
    <property type="pathway name" value="Antigen processing: Ubiquitination &amp; Proteasome degradation"/>
</dbReference>
<dbReference type="SignaLink" id="Q19294"/>
<dbReference type="UniPathway" id="UPA00143"/>
<dbReference type="PRO" id="PR:Q19294"/>
<dbReference type="Proteomes" id="UP000001940">
    <property type="component" value="Chromosome III"/>
</dbReference>
<dbReference type="Bgee" id="WBGene00003134">
    <property type="expression patterns" value="Expressed in germ line (C elegans) and 4 other cell types or tissues"/>
</dbReference>
<dbReference type="GO" id="GO:0005680">
    <property type="term" value="C:anaphase-promoting complex"/>
    <property type="evidence" value="ECO:0000318"/>
    <property type="project" value="GO_Central"/>
</dbReference>
<dbReference type="GO" id="GO:0060090">
    <property type="term" value="F:molecular adaptor activity"/>
    <property type="evidence" value="ECO:0000304"/>
    <property type="project" value="WormBase"/>
</dbReference>
<dbReference type="GO" id="GO:0031145">
    <property type="term" value="P:anaphase-promoting complex-dependent catabolic process"/>
    <property type="evidence" value="ECO:0000318"/>
    <property type="project" value="GO_Central"/>
</dbReference>
<dbReference type="GO" id="GO:0008356">
    <property type="term" value="P:asymmetric cell division"/>
    <property type="evidence" value="ECO:0000315"/>
    <property type="project" value="UniProtKB"/>
</dbReference>
<dbReference type="GO" id="GO:0051301">
    <property type="term" value="P:cell division"/>
    <property type="evidence" value="ECO:0000318"/>
    <property type="project" value="GO_Central"/>
</dbReference>
<dbReference type="GO" id="GO:0051321">
    <property type="term" value="P:meiotic cell cycle"/>
    <property type="evidence" value="ECO:0007669"/>
    <property type="project" value="UniProtKB-KW"/>
</dbReference>
<dbReference type="GO" id="GO:0006836">
    <property type="term" value="P:neurotransmitter transport"/>
    <property type="evidence" value="ECO:0007669"/>
    <property type="project" value="UniProtKB-KW"/>
</dbReference>
<dbReference type="GO" id="GO:0009949">
    <property type="term" value="P:polarity specification of anterior/posterior axis"/>
    <property type="evidence" value="ECO:0000315"/>
    <property type="project" value="UniProtKB"/>
</dbReference>
<dbReference type="GO" id="GO:1905188">
    <property type="term" value="P:positive regulation of metaphase/anaphase transition of meiosis I"/>
    <property type="evidence" value="ECO:0000315"/>
    <property type="project" value="WormBase"/>
</dbReference>
<dbReference type="GO" id="GO:0045842">
    <property type="term" value="P:positive regulation of mitotic metaphase/anaphase transition"/>
    <property type="evidence" value="ECO:0000318"/>
    <property type="project" value="GO_Central"/>
</dbReference>
<dbReference type="GO" id="GO:0016567">
    <property type="term" value="P:protein ubiquitination"/>
    <property type="evidence" value="ECO:0000318"/>
    <property type="project" value="GO_Central"/>
</dbReference>
<dbReference type="GO" id="GO:0051445">
    <property type="term" value="P:regulation of meiotic cell cycle"/>
    <property type="evidence" value="ECO:0000303"/>
    <property type="project" value="ComplexPortal"/>
</dbReference>
<dbReference type="GO" id="GO:0007346">
    <property type="term" value="P:regulation of mitotic cell cycle"/>
    <property type="evidence" value="ECO:0000303"/>
    <property type="project" value="ComplexPortal"/>
</dbReference>
<dbReference type="FunFam" id="1.25.40.10:FF:003705">
    <property type="entry name" value="Cell division cycle protein 23 homolog"/>
    <property type="match status" value="1"/>
</dbReference>
<dbReference type="Gene3D" id="1.25.40.10">
    <property type="entry name" value="Tetratricopeptide repeat domain"/>
    <property type="match status" value="2"/>
</dbReference>
<dbReference type="InterPro" id="IPR007192">
    <property type="entry name" value="APC8"/>
</dbReference>
<dbReference type="InterPro" id="IPR011990">
    <property type="entry name" value="TPR-like_helical_dom_sf"/>
</dbReference>
<dbReference type="InterPro" id="IPR019734">
    <property type="entry name" value="TPR_rpt"/>
</dbReference>
<dbReference type="PANTHER" id="PTHR12558">
    <property type="entry name" value="CELL DIVISION CYCLE 16,23,27"/>
    <property type="match status" value="1"/>
</dbReference>
<dbReference type="PANTHER" id="PTHR12558:SF10">
    <property type="entry name" value="CELL DIVISION CYCLE PROTEIN 23 HOMOLOG"/>
    <property type="match status" value="1"/>
</dbReference>
<dbReference type="Pfam" id="PF04049">
    <property type="entry name" value="ANAPC8"/>
    <property type="match status" value="1"/>
</dbReference>
<dbReference type="Pfam" id="PF13181">
    <property type="entry name" value="TPR_8"/>
    <property type="match status" value="2"/>
</dbReference>
<dbReference type="SMART" id="SM00028">
    <property type="entry name" value="TPR"/>
    <property type="match status" value="7"/>
</dbReference>
<dbReference type="SUPFAM" id="SSF48452">
    <property type="entry name" value="TPR-like"/>
    <property type="match status" value="2"/>
</dbReference>
<dbReference type="PROSITE" id="PS50005">
    <property type="entry name" value="TPR"/>
    <property type="match status" value="5"/>
</dbReference>
<dbReference type="PROSITE" id="PS50293">
    <property type="entry name" value="TPR_REGION"/>
    <property type="match status" value="1"/>
</dbReference>
<name>CDC23_CAEEL</name>
<organism evidence="13">
    <name type="scientific">Caenorhabditis elegans</name>
    <dbReference type="NCBI Taxonomy" id="6239"/>
    <lineage>
        <taxon>Eukaryota</taxon>
        <taxon>Metazoa</taxon>
        <taxon>Ecdysozoa</taxon>
        <taxon>Nematoda</taxon>
        <taxon>Chromadorea</taxon>
        <taxon>Rhabditida</taxon>
        <taxon>Rhabditina</taxon>
        <taxon>Rhabditomorpha</taxon>
        <taxon>Rhabditoidea</taxon>
        <taxon>Rhabditidae</taxon>
        <taxon>Peloderinae</taxon>
        <taxon>Caenorhabditis</taxon>
    </lineage>
</organism>
<feature type="chain" id="PRO_0000435330" description="Cell division cycle protein 23 homolog" evidence="12">
    <location>
        <begin position="1"/>
        <end position="673"/>
    </location>
</feature>
<feature type="repeat" description="TPR 1" evidence="2">
    <location>
        <begin position="86"/>
        <end position="120"/>
    </location>
</feature>
<feature type="repeat" description="TPR 2" evidence="2">
    <location>
        <begin position="159"/>
        <end position="195"/>
    </location>
</feature>
<feature type="repeat" description="TPR 3" evidence="2">
    <location>
        <begin position="232"/>
        <end position="267"/>
    </location>
</feature>
<feature type="repeat" description="TPR 4" evidence="2">
    <location>
        <begin position="332"/>
        <end position="365"/>
    </location>
</feature>
<feature type="repeat" description="TPR 5" evidence="2">
    <location>
        <begin position="400"/>
        <end position="433"/>
    </location>
</feature>
<feature type="repeat" description="TPR 6" evidence="2">
    <location>
        <begin position="434"/>
        <end position="467"/>
    </location>
</feature>
<feature type="repeat" description="TPR 7" evidence="2">
    <location>
        <begin position="469"/>
        <end position="501"/>
    </location>
</feature>
<feature type="repeat" description="TPR 8" evidence="2">
    <location>
        <begin position="502"/>
        <end position="535"/>
    </location>
</feature>
<feature type="repeat" description="TPR 9" evidence="2">
    <location>
        <begin position="539"/>
        <end position="572"/>
    </location>
</feature>
<feature type="repeat" description="TPR 10" evidence="2">
    <location>
        <begin position="577"/>
        <end position="610"/>
    </location>
</feature>
<feature type="region of interest" description="Disordered" evidence="3">
    <location>
        <begin position="628"/>
        <end position="673"/>
    </location>
</feature>
<feature type="compositionally biased region" description="Low complexity" evidence="3">
    <location>
        <begin position="635"/>
        <end position="646"/>
    </location>
</feature>
<feature type="compositionally biased region" description="Acidic residues" evidence="3">
    <location>
        <begin position="650"/>
        <end position="673"/>
    </location>
</feature>
<feature type="mutagenesis site" description="In or192; results in sterility." evidence="6">
    <original>E</original>
    <variation>K</variation>
    <location>
        <position position="70"/>
    </location>
</feature>
<feature type="mutagenesis site" description="In ax68; results in sterility." evidence="6">
    <original>E</original>
    <variation>K</variation>
    <location>
        <position position="161"/>
    </location>
</feature>
<feature type="mutagenesis site" description="In ax82; results in sterility." evidence="6">
    <original>E</original>
    <variation>K</variation>
    <location>
        <position position="237"/>
    </location>
</feature>
<feature type="mutagenesis site" description="In ax77; results in sterility." evidence="6">
    <original>A</original>
    <variation>L</variation>
    <location>
        <position position="339"/>
    </location>
</feature>
<feature type="mutagenesis site" description="In ax79 and ax136; results in sterility." evidence="6">
    <original>E</original>
    <variation>K</variation>
    <location>
        <position position="401"/>
    </location>
</feature>
<feature type="mutagenesis site" description="In av26; weak suppressor of mat-3 mutations." evidence="9">
    <original>L</original>
    <variation>F</variation>
    <location>
        <position position="433"/>
    </location>
</feature>
<feature type="mutagenesis site" description="In ax70; results in sterility." evidence="6">
    <original>A</original>
    <variation>V</variation>
    <location>
        <position position="451"/>
    </location>
</feature>
<feature type="mutagenesis site" description="In or172, or180 and or187; maternal-effect embryonic lethal." evidence="6">
    <original>S</original>
    <variation>F</variation>
    <location>
        <position position="502"/>
    </location>
</feature>
<feature type="mutagenesis site" description="In or180; embryonic lethal." evidence="4 9">
    <original>S</original>
    <variation>F</variation>
    <location>
        <position position="502"/>
    </location>
</feature>
<feature type="mutagenesis site" description="In ax148; maternal-effect embryonic lethal." evidence="6">
    <original>A</original>
    <variation>T</variation>
    <location>
        <position position="528"/>
    </location>
</feature>
<feature type="mutagenesis site" description="In ax71; results in sterility." evidence="6">
    <original>G</original>
    <variation>D</variation>
    <location>
        <position position="532"/>
    </location>
</feature>
<protein>
    <recommendedName>
        <fullName evidence="11">Cell division cycle protein 23 homolog</fullName>
    </recommendedName>
    <alternativeName>
        <fullName evidence="1">Anaphase-promoting complex subunit 8</fullName>
        <shortName evidence="1">APC8</shortName>
    </alternativeName>
    <alternativeName>
        <fullName evidence="14">Metaphase-to-anaphase transition defect protein 3</fullName>
    </alternativeName>
</protein>
<reference evidence="13" key="1">
    <citation type="journal article" date="1998" name="Science">
        <title>Genome sequence of the nematode C. elegans: a platform for investigating biology.</title>
        <authorList>
            <consortium name="The C. elegans sequencing consortium"/>
        </authorList>
    </citation>
    <scope>NUCLEOTIDE SEQUENCE [LARGE SCALE GENOMIC DNA]</scope>
    <source>
        <strain evidence="13">Bristol N2</strain>
    </source>
</reference>
<reference evidence="12" key="2">
    <citation type="journal article" date="2000" name="J. Cell Biol.">
        <title>Metaphase to anaphase (mat) transition-defective mutants in Caenorhabditis elegans.</title>
        <authorList>
            <person name="Golden A."/>
            <person name="Sadler P.L."/>
            <person name="Wallenfang M.R."/>
            <person name="Schumacher J.M."/>
            <person name="Hamill D.R."/>
            <person name="Bates G."/>
            <person name="Bowerman B."/>
            <person name="Seydoux G."/>
            <person name="Shakes D.C."/>
        </authorList>
    </citation>
    <scope>FUNCTION</scope>
    <scope>MUTAGENESIS OF SER-502</scope>
</reference>
<reference evidence="12" key="3">
    <citation type="journal article" date="2002" name="Dev. Cell">
        <title>The anaphase-promoting complex and separin are required for embryonic anterior-posterior axis formation.</title>
        <authorList>
            <person name="Rappleye C.A."/>
            <person name="Tagawa A."/>
            <person name="Lyczak R."/>
            <person name="Bowerman B."/>
            <person name="Aroian R.V."/>
        </authorList>
    </citation>
    <scope>FUNCTION</scope>
    <scope>DISRUPTION PHENOTYPE</scope>
</reference>
<reference evidence="12" key="4">
    <citation type="journal article" date="2002" name="Genetics">
        <title>Multiple subunits of the Caenorhabditis elegans anaphase-promoting complex are required for chromosome segregation during meiosis I.</title>
        <authorList>
            <person name="Davis E.S."/>
            <person name="Wille L."/>
            <person name="Chestnut B.A."/>
            <person name="Sadler P.L."/>
            <person name="Shakes D.C."/>
            <person name="Golden A."/>
        </authorList>
    </citation>
    <scope>FUNCTION</scope>
    <scope>DISRUPTION PHENOTYPE</scope>
    <scope>MUTAGENESIS OF GLU-70; GLU-161; GLU-237; ALA-339; GLU-401; ALA-451; SER-502; ALA-528 AND GLY-532</scope>
</reference>
<reference evidence="12" key="5">
    <citation type="journal article" date="2004" name="Curr. Biol.">
        <title>The anaphase-promoting complex regulates the abundance of GLR-1 glutamate receptors in the ventral nerve cord of C. elegans.</title>
        <authorList>
            <person name="Juo P."/>
            <person name="Kaplan J.M."/>
        </authorList>
    </citation>
    <scope>FUNCTION</scope>
</reference>
<reference evidence="12" key="6">
    <citation type="journal article" date="2004" name="Genetics">
        <title>Caenorhabditis elegans lin-35/Rb, efl-1/E2F and other synthetic multivulva genes negatively regulate the anaphase-promoting complex gene mat-3/APC8.</title>
        <authorList>
            <person name="Garbe D."/>
            <person name="Doto J.B."/>
            <person name="Sundaram M.V."/>
        </authorList>
    </citation>
    <scope>FUNCTION</scope>
    <scope>DISRUPTION PHENOTYPE</scope>
</reference>
<reference evidence="12" key="7">
    <citation type="journal article" date="2007" name="Genetics">
        <title>Components of the spindle assembly checkpoint regulate the anaphase-promoting complex during meiosis in Caenorhabditis elegans.</title>
        <authorList>
            <person name="Stein K.K."/>
            <person name="Davis E.S."/>
            <person name="Hays T."/>
            <person name="Golden A."/>
        </authorList>
    </citation>
    <scope>MUTAGENESIS OF LEU-433 AND SER-502</scope>
</reference>
<reference evidence="12" key="8">
    <citation type="journal article" date="2014" name="Mol. Cell. Neurosci.">
        <title>The anaphase-promoting complex (APC) ubiquitin ligase regulates GABA transmission at the C. elegans neuromuscular junction.</title>
        <authorList>
            <person name="Kowalski J.R."/>
            <person name="Dube H."/>
            <person name="Touroutine D."/>
            <person name="Rush K.M."/>
            <person name="Goodwin P.R."/>
            <person name="Carozza M."/>
            <person name="Didier Z."/>
            <person name="Francis M.M."/>
            <person name="Juo P."/>
        </authorList>
    </citation>
    <scope>FUNCTION</scope>
</reference>